<comment type="function">
    <text evidence="1">Core component of nucleosome. Nucleosomes wrap and compact DNA into chromatin, limiting DNA accessibility to the cellular machineries which require DNA as a template. Histones thereby play a central role in transcription regulation, DNA repair, DNA replication and chromosomal stability. DNA accessibility is regulated via a complex set of post-translational modifications of histones, also called histone code, and nucleosome remodeling (By similarity).</text>
</comment>
<comment type="subunit">
    <text evidence="1">The nucleosome is a histone octamer containing two molecules each of H2A, H2B, H3 and H4 assembled in one H3-H4 heterotetramer and two H2A-H2B heterodimers. The octamer wraps approximately 147 bp of DNA (By similarity).</text>
</comment>
<comment type="subcellular location">
    <subcellularLocation>
        <location>Nucleus</location>
    </subcellularLocation>
    <subcellularLocation>
        <location>Chromosome</location>
    </subcellularLocation>
</comment>
<comment type="tissue specificity">
    <text evidence="4">Pollen specific.</text>
</comment>
<comment type="developmental stage">
    <text evidence="4">Detected only in the generative cell and the sperm-cell of late bicellular and tricellular pollen. Not detected in pollen vegetative cells. Replication-independent expression.</text>
</comment>
<comment type="disruption phenotype">
    <text evidence="4">No visible phenotype. The high redundancy of histones H3 might compensate for this mutation.</text>
</comment>
<comment type="similarity">
    <text evidence="5">Belongs to the histone H3 family.</text>
</comment>
<reference key="1">
    <citation type="journal article" date="2000" name="Nature">
        <title>Sequence and analysis of chromosome 1 of the plant Arabidopsis thaliana.</title>
        <authorList>
            <person name="Theologis A."/>
            <person name="Ecker J.R."/>
            <person name="Palm C.J."/>
            <person name="Federspiel N.A."/>
            <person name="Kaul S."/>
            <person name="White O."/>
            <person name="Alonso J."/>
            <person name="Altafi H."/>
            <person name="Araujo R."/>
            <person name="Bowman C.L."/>
            <person name="Brooks S.Y."/>
            <person name="Buehler E."/>
            <person name="Chan A."/>
            <person name="Chao Q."/>
            <person name="Chen H."/>
            <person name="Cheuk R.F."/>
            <person name="Chin C.W."/>
            <person name="Chung M.K."/>
            <person name="Conn L."/>
            <person name="Conway A.B."/>
            <person name="Conway A.R."/>
            <person name="Creasy T.H."/>
            <person name="Dewar K."/>
            <person name="Dunn P."/>
            <person name="Etgu P."/>
            <person name="Feldblyum T.V."/>
            <person name="Feng J.-D."/>
            <person name="Fong B."/>
            <person name="Fujii C.Y."/>
            <person name="Gill J.E."/>
            <person name="Goldsmith A.D."/>
            <person name="Haas B."/>
            <person name="Hansen N.F."/>
            <person name="Hughes B."/>
            <person name="Huizar L."/>
            <person name="Hunter J.L."/>
            <person name="Jenkins J."/>
            <person name="Johnson-Hopson C."/>
            <person name="Khan S."/>
            <person name="Khaykin E."/>
            <person name="Kim C.J."/>
            <person name="Koo H.L."/>
            <person name="Kremenetskaia I."/>
            <person name="Kurtz D.B."/>
            <person name="Kwan A."/>
            <person name="Lam B."/>
            <person name="Langin-Hooper S."/>
            <person name="Lee A."/>
            <person name="Lee J.M."/>
            <person name="Lenz C.A."/>
            <person name="Li J.H."/>
            <person name="Li Y.-P."/>
            <person name="Lin X."/>
            <person name="Liu S.X."/>
            <person name="Liu Z.A."/>
            <person name="Luros J.S."/>
            <person name="Maiti R."/>
            <person name="Marziali A."/>
            <person name="Militscher J."/>
            <person name="Miranda M."/>
            <person name="Nguyen M."/>
            <person name="Nierman W.C."/>
            <person name="Osborne B.I."/>
            <person name="Pai G."/>
            <person name="Peterson J."/>
            <person name="Pham P.K."/>
            <person name="Rizzo M."/>
            <person name="Rooney T."/>
            <person name="Rowley D."/>
            <person name="Sakano H."/>
            <person name="Salzberg S.L."/>
            <person name="Schwartz J.R."/>
            <person name="Shinn P."/>
            <person name="Southwick A.M."/>
            <person name="Sun H."/>
            <person name="Tallon L.J."/>
            <person name="Tambunga G."/>
            <person name="Toriumi M.J."/>
            <person name="Town C.D."/>
            <person name="Utterback T."/>
            <person name="Van Aken S."/>
            <person name="Vaysberg M."/>
            <person name="Vysotskaia V.S."/>
            <person name="Walker M."/>
            <person name="Wu D."/>
            <person name="Yu G."/>
            <person name="Fraser C.M."/>
            <person name="Venter J.C."/>
            <person name="Davis R.W."/>
        </authorList>
    </citation>
    <scope>NUCLEOTIDE SEQUENCE [LARGE SCALE GENOMIC DNA]</scope>
    <source>
        <strain>cv. Columbia</strain>
    </source>
</reference>
<reference key="2">
    <citation type="journal article" date="2017" name="Plant J.">
        <title>Araport11: a complete reannotation of the Arabidopsis thaliana reference genome.</title>
        <authorList>
            <person name="Cheng C.Y."/>
            <person name="Krishnakumar V."/>
            <person name="Chan A.P."/>
            <person name="Thibaud-Nissen F."/>
            <person name="Schobel S."/>
            <person name="Town C.D."/>
        </authorList>
    </citation>
    <scope>GENOME REANNOTATION</scope>
    <source>
        <strain>cv. Columbia</strain>
    </source>
</reference>
<reference key="3">
    <citation type="submission" date="2007-06" db="EMBL/GenBank/DDBJ databases">
        <title>Arabidopsis ORF clones.</title>
        <authorList>
            <person name="Bautista V.R."/>
            <person name="Kim C.J."/>
            <person name="Chen H."/>
            <person name="Quan R."/>
            <person name="De Los Reyes C."/>
            <person name="Ecker J.R."/>
        </authorList>
    </citation>
    <scope>NUCLEOTIDE SEQUENCE [LARGE SCALE MRNA]</scope>
    <source>
        <strain>cv. Columbia</strain>
    </source>
</reference>
<reference key="4">
    <citation type="journal article" date="2005" name="Plant J.">
        <title>Analysis of the histone H3 gene family in Arabidopsis and identification of the male-gamete-specific variant AtMGH3.</title>
        <authorList>
            <person name="Okada T."/>
            <person name="Endo M."/>
            <person name="Singh M.B."/>
            <person name="Bhalla P.L."/>
        </authorList>
    </citation>
    <scope>IDENTIFICATION</scope>
    <scope>DEVELOPMENTAL STAGE</scope>
    <scope>TISSUE SPECIFICITY</scope>
    <scope>DISRUPTION PHENOTYPE</scope>
</reference>
<feature type="chain" id="PRO_0000264606" description="Histone H3-like 2">
    <location>
        <begin position="1"/>
        <end position="137"/>
    </location>
</feature>
<feature type="region of interest" description="Disordered" evidence="3">
    <location>
        <begin position="1"/>
        <end position="36"/>
    </location>
</feature>
<feature type="compositionally biased region" description="Basic residues" evidence="3">
    <location>
        <begin position="25"/>
        <end position="36"/>
    </location>
</feature>
<feature type="modified residue" description="N6,N6,N6-trimethyllysine; alternate" evidence="2">
    <location>
        <position position="5"/>
    </location>
</feature>
<feature type="modified residue" description="N6,N6-dimethyllysine; alternate" evidence="2">
    <location>
        <position position="5"/>
    </location>
</feature>
<feature type="modified residue" description="N6-methyllysine; alternate" evidence="2">
    <location>
        <position position="5"/>
    </location>
</feature>
<feature type="modified residue" description="N6,N6,N6-trimethyllysine; alternate" evidence="2">
    <location>
        <position position="10"/>
    </location>
</feature>
<feature type="modified residue" description="N6,N6-dimethyllysine; alternate" evidence="2">
    <location>
        <position position="10"/>
    </location>
</feature>
<feature type="modified residue" description="N6-acetyllysine; alternate" evidence="2">
    <location>
        <position position="10"/>
    </location>
</feature>
<feature type="modified residue" description="N6-methyllysine; alternate" evidence="2">
    <location>
        <position position="10"/>
    </location>
</feature>
<feature type="modified residue" description="Phosphoserine" evidence="2">
    <location>
        <position position="11"/>
    </location>
</feature>
<feature type="modified residue" description="Phosphothreonine" evidence="2">
    <location>
        <position position="12"/>
    </location>
</feature>
<feature type="modified residue" description="N6-acetyllysine" evidence="2">
    <location>
        <position position="15"/>
    </location>
</feature>
<feature type="modified residue" description="N6-acetyllysine; alternate" evidence="2">
    <location>
        <position position="19"/>
    </location>
</feature>
<feature type="modified residue" description="N6-methyllysine; alternate" evidence="2">
    <location>
        <position position="19"/>
    </location>
</feature>
<feature type="modified residue" description="N6-acetyllysine; alternate" evidence="2">
    <location>
        <position position="24"/>
    </location>
</feature>
<feature type="modified residue" description="N6-methyllysine; alternate" evidence="2">
    <location>
        <position position="24"/>
    </location>
</feature>
<feature type="modified residue" description="N6,N6,N6-trimethyllysine; alternate" evidence="2">
    <location>
        <position position="28"/>
    </location>
</feature>
<feature type="modified residue" description="N6,N6-dimethyllysine; alternate" evidence="2">
    <location>
        <position position="28"/>
    </location>
</feature>
<feature type="modified residue" description="N6-methyllysine; alternate" evidence="2">
    <location>
        <position position="28"/>
    </location>
</feature>
<feature type="modified residue" description="N6,N6,N6-trimethyllysine; alternate" evidence="2">
    <location>
        <position position="38"/>
    </location>
</feature>
<feature type="modified residue" description="N6,N6-dimethyllysine; alternate" evidence="2">
    <location>
        <position position="38"/>
    </location>
</feature>
<feature type="modified residue" description="N6-methyllysine; alternate" evidence="2">
    <location>
        <position position="38"/>
    </location>
</feature>
<gene>
    <name type="primary">MGH3</name>
    <name type="ordered locus">At1g19890</name>
    <name type="ORF">F6F9.5</name>
</gene>
<dbReference type="EMBL" id="AC007797">
    <property type="protein sequence ID" value="AAG12563.1"/>
    <property type="molecule type" value="Genomic_DNA"/>
</dbReference>
<dbReference type="EMBL" id="CP002684">
    <property type="protein sequence ID" value="AEE29910.1"/>
    <property type="molecule type" value="Genomic_DNA"/>
</dbReference>
<dbReference type="EMBL" id="BT030656">
    <property type="protein sequence ID" value="ABR46236.1"/>
    <property type="molecule type" value="mRNA"/>
</dbReference>
<dbReference type="PIR" id="C86332">
    <property type="entry name" value="C86332"/>
</dbReference>
<dbReference type="RefSeq" id="NP_173418.1">
    <property type="nucleotide sequence ID" value="NM_101844.2"/>
</dbReference>
<dbReference type="SMR" id="Q9FXI7"/>
<dbReference type="BioGRID" id="23816">
    <property type="interactions" value="8"/>
</dbReference>
<dbReference type="FunCoup" id="Q9FXI7">
    <property type="interactions" value="19"/>
</dbReference>
<dbReference type="STRING" id="3702.Q9FXI7"/>
<dbReference type="PaxDb" id="3702-AT1G19890.1"/>
<dbReference type="ProteomicsDB" id="247250"/>
<dbReference type="EnsemblPlants" id="AT1G19890.1">
    <property type="protein sequence ID" value="AT1G19890.1"/>
    <property type="gene ID" value="AT1G19890"/>
</dbReference>
<dbReference type="GeneID" id="838577"/>
<dbReference type="Gramene" id="AT1G19890.1">
    <property type="protein sequence ID" value="AT1G19890.1"/>
    <property type="gene ID" value="AT1G19890"/>
</dbReference>
<dbReference type="KEGG" id="ath:AT1G19890"/>
<dbReference type="Araport" id="AT1G19890"/>
<dbReference type="TAIR" id="AT1G19890">
    <property type="gene designation" value="MGH3"/>
</dbReference>
<dbReference type="eggNOG" id="KOG1745">
    <property type="taxonomic scope" value="Eukaryota"/>
</dbReference>
<dbReference type="HOGENOM" id="CLU_078295_4_0_1"/>
<dbReference type="InParanoid" id="Q9FXI7"/>
<dbReference type="OMA" id="MAQPKCT"/>
<dbReference type="PhylomeDB" id="Q9FXI7"/>
<dbReference type="PRO" id="PR:Q9FXI7"/>
<dbReference type="Proteomes" id="UP000006548">
    <property type="component" value="Chromosome 1"/>
</dbReference>
<dbReference type="ExpressionAtlas" id="Q9FXI7">
    <property type="expression patterns" value="baseline and differential"/>
</dbReference>
<dbReference type="GO" id="GO:0048555">
    <property type="term" value="C:generative cell nucleus"/>
    <property type="evidence" value="ECO:0000314"/>
    <property type="project" value="TAIR"/>
</dbReference>
<dbReference type="GO" id="GO:0000786">
    <property type="term" value="C:nucleosome"/>
    <property type="evidence" value="ECO:0007669"/>
    <property type="project" value="UniProtKB-KW"/>
</dbReference>
<dbReference type="GO" id="GO:0005634">
    <property type="term" value="C:nucleus"/>
    <property type="evidence" value="ECO:0000314"/>
    <property type="project" value="TAIR"/>
</dbReference>
<dbReference type="GO" id="GO:0003677">
    <property type="term" value="F:DNA binding"/>
    <property type="evidence" value="ECO:0007669"/>
    <property type="project" value="UniProtKB-KW"/>
</dbReference>
<dbReference type="GO" id="GO:0046982">
    <property type="term" value="F:protein heterodimerization activity"/>
    <property type="evidence" value="ECO:0007669"/>
    <property type="project" value="InterPro"/>
</dbReference>
<dbReference type="GO" id="GO:0030527">
    <property type="term" value="F:structural constituent of chromatin"/>
    <property type="evidence" value="ECO:0007669"/>
    <property type="project" value="InterPro"/>
</dbReference>
<dbReference type="GO" id="GO:0009567">
    <property type="term" value="P:double fertilization forming a zygote and endosperm"/>
    <property type="evidence" value="ECO:0000270"/>
    <property type="project" value="TAIR"/>
</dbReference>
<dbReference type="GO" id="GO:0048235">
    <property type="term" value="P:pollen sperm cell differentiation"/>
    <property type="evidence" value="ECO:0000270"/>
    <property type="project" value="TAIR"/>
</dbReference>
<dbReference type="CDD" id="cd22911">
    <property type="entry name" value="HFD_H3"/>
    <property type="match status" value="1"/>
</dbReference>
<dbReference type="FunFam" id="1.10.20.10:FF:000024">
    <property type="entry name" value="Histone H3"/>
    <property type="match status" value="1"/>
</dbReference>
<dbReference type="Gene3D" id="1.10.20.10">
    <property type="entry name" value="Histone, subunit A"/>
    <property type="match status" value="1"/>
</dbReference>
<dbReference type="InterPro" id="IPR009072">
    <property type="entry name" value="Histone-fold"/>
</dbReference>
<dbReference type="InterPro" id="IPR007125">
    <property type="entry name" value="Histone_H2A/H2B/H3"/>
</dbReference>
<dbReference type="InterPro" id="IPR000164">
    <property type="entry name" value="Histone_H3/CENP-A"/>
</dbReference>
<dbReference type="PANTHER" id="PTHR11426">
    <property type="entry name" value="HISTONE H3"/>
    <property type="match status" value="1"/>
</dbReference>
<dbReference type="Pfam" id="PF00125">
    <property type="entry name" value="Histone"/>
    <property type="match status" value="1"/>
</dbReference>
<dbReference type="PRINTS" id="PR00622">
    <property type="entry name" value="HISTONEH3"/>
</dbReference>
<dbReference type="SMART" id="SM00428">
    <property type="entry name" value="H3"/>
    <property type="match status" value="1"/>
</dbReference>
<dbReference type="SUPFAM" id="SSF47113">
    <property type="entry name" value="Histone-fold"/>
    <property type="match status" value="1"/>
</dbReference>
<dbReference type="PROSITE" id="PS00959">
    <property type="entry name" value="HISTONE_H3_2"/>
    <property type="match status" value="1"/>
</dbReference>
<name>H3L2_ARATH</name>
<protein>
    <recommendedName>
        <fullName>Histone H3-like 2</fullName>
    </recommendedName>
    <alternativeName>
        <fullName>Male gamete-specific histone H3</fullName>
    </alternativeName>
</protein>
<evidence type="ECO:0000250" key="1"/>
<evidence type="ECO:0000250" key="2">
    <source>
        <dbReference type="UniProtKB" id="P59226"/>
    </source>
</evidence>
<evidence type="ECO:0000256" key="3">
    <source>
        <dbReference type="SAM" id="MobiDB-lite"/>
    </source>
</evidence>
<evidence type="ECO:0000269" key="4">
    <source>
    </source>
</evidence>
<evidence type="ECO:0000305" key="5"/>
<organism>
    <name type="scientific">Arabidopsis thaliana</name>
    <name type="common">Mouse-ear cress</name>
    <dbReference type="NCBI Taxonomy" id="3702"/>
    <lineage>
        <taxon>Eukaryota</taxon>
        <taxon>Viridiplantae</taxon>
        <taxon>Streptophyta</taxon>
        <taxon>Embryophyta</taxon>
        <taxon>Tracheophyta</taxon>
        <taxon>Spermatophyta</taxon>
        <taxon>Magnoliopsida</taxon>
        <taxon>eudicotyledons</taxon>
        <taxon>Gunneridae</taxon>
        <taxon>Pentapetalae</taxon>
        <taxon>rosids</taxon>
        <taxon>malvids</taxon>
        <taxon>Brassicales</taxon>
        <taxon>Brassicaceae</taxon>
        <taxon>Camelineae</taxon>
        <taxon>Arabidopsis</taxon>
    </lineage>
</organism>
<sequence>MARTKQTARKSTGGKGPRKELATKAARKTRRPYRGGVKRAHRFRPGTVALREIRKYQKSTDLLIRKLPFQRLVREIAQDFKVDLRFQSHAVLALQEAAEAYLVGLFEDTNLCAIHAKRVTIMSKDIQLARRIRGERA</sequence>
<proteinExistence type="evidence at transcript level"/>
<accession>Q9FXI7</accession>
<accession>A6QRD3</accession>
<keyword id="KW-0007">Acetylation</keyword>
<keyword id="KW-0158">Chromosome</keyword>
<keyword id="KW-0238">DNA-binding</keyword>
<keyword id="KW-0488">Methylation</keyword>
<keyword id="KW-0544">Nucleosome core</keyword>
<keyword id="KW-0539">Nucleus</keyword>
<keyword id="KW-0597">Phosphoprotein</keyword>
<keyword id="KW-1185">Reference proteome</keyword>